<dbReference type="EMBL" id="AL513382">
    <property type="protein sequence ID" value="CAD05484.1"/>
    <property type="molecule type" value="Genomic_DNA"/>
</dbReference>
<dbReference type="EMBL" id="AE014613">
    <property type="protein sequence ID" value="AAO68742.1"/>
    <property type="molecule type" value="Genomic_DNA"/>
</dbReference>
<dbReference type="RefSeq" id="NP_456308.1">
    <property type="nucleotide sequence ID" value="NC_003198.1"/>
</dbReference>
<dbReference type="RefSeq" id="WP_000338376.1">
    <property type="nucleotide sequence ID" value="NZ_WSUR01000004.1"/>
</dbReference>
<dbReference type="SMR" id="P65525"/>
<dbReference type="STRING" id="220341.gene:17585849"/>
<dbReference type="KEGG" id="stt:t1076"/>
<dbReference type="KEGG" id="sty:STY1929"/>
<dbReference type="PATRIC" id="fig|220341.7.peg.1946"/>
<dbReference type="eggNOG" id="COG3263">
    <property type="taxonomic scope" value="Bacteria"/>
</dbReference>
<dbReference type="HOGENOM" id="CLU_005912_9_2_6"/>
<dbReference type="OMA" id="QIGMFVL"/>
<dbReference type="OrthoDB" id="9810759at2"/>
<dbReference type="Proteomes" id="UP000000541">
    <property type="component" value="Chromosome"/>
</dbReference>
<dbReference type="Proteomes" id="UP000002670">
    <property type="component" value="Chromosome"/>
</dbReference>
<dbReference type="GO" id="GO:0005886">
    <property type="term" value="C:plasma membrane"/>
    <property type="evidence" value="ECO:0007669"/>
    <property type="project" value="UniProtKB-SubCell"/>
</dbReference>
<dbReference type="GO" id="GO:0050660">
    <property type="term" value="F:flavin adenine dinucleotide binding"/>
    <property type="evidence" value="ECO:0007669"/>
    <property type="project" value="InterPro"/>
</dbReference>
<dbReference type="GO" id="GO:0015386">
    <property type="term" value="F:potassium:proton antiporter activity"/>
    <property type="evidence" value="ECO:0007669"/>
    <property type="project" value="UniProtKB-UniRule"/>
</dbReference>
<dbReference type="GO" id="GO:0006884">
    <property type="term" value="P:cell volume homeostasis"/>
    <property type="evidence" value="ECO:0007669"/>
    <property type="project" value="InterPro"/>
</dbReference>
<dbReference type="FunFam" id="1.20.1530.20:FF:000002">
    <property type="entry name" value="K(+)/H(+) antiporter NhaP2"/>
    <property type="match status" value="1"/>
</dbReference>
<dbReference type="Gene3D" id="1.20.1530.20">
    <property type="match status" value="1"/>
</dbReference>
<dbReference type="Gene3D" id="3.30.465.10">
    <property type="match status" value="1"/>
</dbReference>
<dbReference type="Gene3D" id="3.30.70.1450">
    <property type="entry name" value="Regulator of K+ conductance, C-terminal domain"/>
    <property type="match status" value="1"/>
</dbReference>
<dbReference type="HAMAP" id="MF_01075">
    <property type="entry name" value="NhaP2"/>
    <property type="match status" value="1"/>
</dbReference>
<dbReference type="InterPro" id="IPR006153">
    <property type="entry name" value="Cation/H_exchanger_TM"/>
</dbReference>
<dbReference type="InterPro" id="IPR036318">
    <property type="entry name" value="FAD-bd_PCMH-like_sf"/>
</dbReference>
<dbReference type="InterPro" id="IPR016169">
    <property type="entry name" value="FAD-bd_PCMH_sub2"/>
</dbReference>
<dbReference type="InterPro" id="IPR038770">
    <property type="entry name" value="Na+/solute_symporter_sf"/>
</dbReference>
<dbReference type="InterPro" id="IPR023729">
    <property type="entry name" value="NhaP2"/>
</dbReference>
<dbReference type="InterPro" id="IPR006037">
    <property type="entry name" value="RCK_C"/>
</dbReference>
<dbReference type="InterPro" id="IPR036721">
    <property type="entry name" value="RCK_C_sf"/>
</dbReference>
<dbReference type="InterPro" id="IPR005170">
    <property type="entry name" value="Transptr-assoc_dom"/>
</dbReference>
<dbReference type="NCBIfam" id="NF003714">
    <property type="entry name" value="PRK05326.1-1"/>
    <property type="match status" value="1"/>
</dbReference>
<dbReference type="NCBIfam" id="NF003715">
    <property type="entry name" value="PRK05326.1-2"/>
    <property type="match status" value="1"/>
</dbReference>
<dbReference type="NCBIfam" id="NF003716">
    <property type="entry name" value="PRK05326.1-3"/>
    <property type="match status" value="1"/>
</dbReference>
<dbReference type="PANTHER" id="PTHR32507:SF7">
    <property type="entry name" value="K(+)_H(+) ANTIPORTER NHAP2"/>
    <property type="match status" value="1"/>
</dbReference>
<dbReference type="PANTHER" id="PTHR32507">
    <property type="entry name" value="NA(+)/H(+) ANTIPORTER 1"/>
    <property type="match status" value="1"/>
</dbReference>
<dbReference type="Pfam" id="PF03471">
    <property type="entry name" value="CorC_HlyC"/>
    <property type="match status" value="1"/>
</dbReference>
<dbReference type="Pfam" id="PF00999">
    <property type="entry name" value="Na_H_Exchanger"/>
    <property type="match status" value="1"/>
</dbReference>
<dbReference type="Pfam" id="PF02080">
    <property type="entry name" value="TrkA_C"/>
    <property type="match status" value="1"/>
</dbReference>
<dbReference type="SMART" id="SM01091">
    <property type="entry name" value="CorC_HlyC"/>
    <property type="match status" value="1"/>
</dbReference>
<dbReference type="SUPFAM" id="SSF56176">
    <property type="entry name" value="FAD-binding/transporter-associated domain-like"/>
    <property type="match status" value="1"/>
</dbReference>
<dbReference type="SUPFAM" id="SSF116726">
    <property type="entry name" value="TrkA C-terminal domain-like"/>
    <property type="match status" value="1"/>
</dbReference>
<dbReference type="PROSITE" id="PS51202">
    <property type="entry name" value="RCK_C"/>
    <property type="match status" value="1"/>
</dbReference>
<name>NHAP2_SALTI</name>
<keyword id="KW-0050">Antiport</keyword>
<keyword id="KW-0997">Cell inner membrane</keyword>
<keyword id="KW-1003">Cell membrane</keyword>
<keyword id="KW-0406">Ion transport</keyword>
<keyword id="KW-0472">Membrane</keyword>
<keyword id="KW-0630">Potassium</keyword>
<keyword id="KW-0633">Potassium transport</keyword>
<keyword id="KW-0812">Transmembrane</keyword>
<keyword id="KW-1133">Transmembrane helix</keyword>
<keyword id="KW-0813">Transport</keyword>
<sequence>MDAATIISLFILGSILVTSSILLSSFSSRLGIPILVIFLAIGMLAGVDGIGGIPFDNYPFAYMVSNLALAIILLDGGMRTQASSFRVALGPALSLATLGVLITSGLTGMMAAWLFHLDLIEGLLIGAIVGSTDAAAVFSLLGGKGLNERVGSTLEIESGSNDPMAVFLTITLIEMIQKHETGLDWMFAVHIIQQFGLGIVFGLGGGYLLQQMINRISLPSGLYPMLALSGGILIFALTTALEGSGILAVYLCGFLLGNRPIRNRYGILQNFDGLAWLAQIAMFLVLGLLVTPSDLWPIAVPALILSIWMIFFARPLSVFTGLLPFRGFNLRERIFISWVGLRGAVPIILAVFPMMAGLENARLFFNVAFFVVLVSLLLQGTSLSWAAKRAKVVVPPVGWPVSRVGLDIHPDNPWEQFIYQLSADKWCVGAALRDLHMPNETRIAALFRNNELFHPTGSTRLQEGDVLCVIGRERDLPALGKLFSQSPPVSLDQRFFGDFILEANAKFADVALIYGLEEGTEYRDKQQTLGEIIQQLLGAAPVVGDQVEFGGMIWTVAEKEDNVVRKIGVRVAEDEAE</sequence>
<organism>
    <name type="scientific">Salmonella typhi</name>
    <dbReference type="NCBI Taxonomy" id="90370"/>
    <lineage>
        <taxon>Bacteria</taxon>
        <taxon>Pseudomonadati</taxon>
        <taxon>Pseudomonadota</taxon>
        <taxon>Gammaproteobacteria</taxon>
        <taxon>Enterobacterales</taxon>
        <taxon>Enterobacteriaceae</taxon>
        <taxon>Salmonella</taxon>
    </lineage>
</organism>
<gene>
    <name evidence="1" type="primary">nhaP2</name>
    <name type="synonym">cvrA</name>
    <name type="ordered locus">STY1929</name>
    <name type="ordered locus">t1076</name>
</gene>
<comment type="function">
    <text evidence="1">K(+)/H(+) antiporter that extrudes potassium in exchange for external protons and maintains the internal concentration of potassium under toxic levels.</text>
</comment>
<comment type="catalytic activity">
    <reaction evidence="1">
        <text>K(+)(in) + H(+)(out) = K(+)(out) + H(+)(in)</text>
        <dbReference type="Rhea" id="RHEA:29467"/>
        <dbReference type="ChEBI" id="CHEBI:15378"/>
        <dbReference type="ChEBI" id="CHEBI:29103"/>
    </reaction>
    <physiologicalReaction direction="left-to-right" evidence="1">
        <dbReference type="Rhea" id="RHEA:29468"/>
    </physiologicalReaction>
</comment>
<comment type="subcellular location">
    <subcellularLocation>
        <location evidence="1">Cell inner membrane</location>
        <topology evidence="1">Multi-pass membrane protein</topology>
    </subcellularLocation>
</comment>
<comment type="similarity">
    <text evidence="1">Belongs to the monovalent cation:proton antiporter 1 (CPA1) transporter (TC 2.A.36) family. NhaP2 subfamily.</text>
</comment>
<proteinExistence type="inferred from homology"/>
<evidence type="ECO:0000255" key="1">
    <source>
        <dbReference type="HAMAP-Rule" id="MF_01075"/>
    </source>
</evidence>
<accession>P65525</accession>
<accession>Q8XG61</accession>
<reference key="1">
    <citation type="journal article" date="2001" name="Nature">
        <title>Complete genome sequence of a multiple drug resistant Salmonella enterica serovar Typhi CT18.</title>
        <authorList>
            <person name="Parkhill J."/>
            <person name="Dougan G."/>
            <person name="James K.D."/>
            <person name="Thomson N.R."/>
            <person name="Pickard D."/>
            <person name="Wain J."/>
            <person name="Churcher C.M."/>
            <person name="Mungall K.L."/>
            <person name="Bentley S.D."/>
            <person name="Holden M.T.G."/>
            <person name="Sebaihia M."/>
            <person name="Baker S."/>
            <person name="Basham D."/>
            <person name="Brooks K."/>
            <person name="Chillingworth T."/>
            <person name="Connerton P."/>
            <person name="Cronin A."/>
            <person name="Davis P."/>
            <person name="Davies R.M."/>
            <person name="Dowd L."/>
            <person name="White N."/>
            <person name="Farrar J."/>
            <person name="Feltwell T."/>
            <person name="Hamlin N."/>
            <person name="Haque A."/>
            <person name="Hien T.T."/>
            <person name="Holroyd S."/>
            <person name="Jagels K."/>
            <person name="Krogh A."/>
            <person name="Larsen T.S."/>
            <person name="Leather S."/>
            <person name="Moule S."/>
            <person name="O'Gaora P."/>
            <person name="Parry C."/>
            <person name="Quail M.A."/>
            <person name="Rutherford K.M."/>
            <person name="Simmonds M."/>
            <person name="Skelton J."/>
            <person name="Stevens K."/>
            <person name="Whitehead S."/>
            <person name="Barrell B.G."/>
        </authorList>
    </citation>
    <scope>NUCLEOTIDE SEQUENCE [LARGE SCALE GENOMIC DNA]</scope>
    <source>
        <strain>CT18</strain>
    </source>
</reference>
<reference key="2">
    <citation type="journal article" date="2003" name="J. Bacteriol.">
        <title>Comparative genomics of Salmonella enterica serovar Typhi strains Ty2 and CT18.</title>
        <authorList>
            <person name="Deng W."/>
            <person name="Liou S.-R."/>
            <person name="Plunkett G. III"/>
            <person name="Mayhew G.F."/>
            <person name="Rose D.J."/>
            <person name="Burland V."/>
            <person name="Kodoyianni V."/>
            <person name="Schwartz D.C."/>
            <person name="Blattner F.R."/>
        </authorList>
    </citation>
    <scope>NUCLEOTIDE SEQUENCE [LARGE SCALE GENOMIC DNA]</scope>
    <source>
        <strain>ATCC 700931 / Ty2</strain>
    </source>
</reference>
<protein>
    <recommendedName>
        <fullName evidence="1">K(+)/H(+) antiporter NhaP2</fullName>
    </recommendedName>
    <alternativeName>
        <fullName evidence="1">Potassium/proton antiporter NhaP2</fullName>
    </alternativeName>
</protein>
<feature type="chain" id="PRO_0000052386" description="K(+)/H(+) antiporter NhaP2">
    <location>
        <begin position="1"/>
        <end position="577"/>
    </location>
</feature>
<feature type="transmembrane region" description="Helical" evidence="1">
    <location>
        <begin position="3"/>
        <end position="23"/>
    </location>
</feature>
<feature type="transmembrane region" description="Helical" evidence="1">
    <location>
        <begin position="30"/>
        <end position="50"/>
    </location>
</feature>
<feature type="transmembrane region" description="Helical" evidence="1">
    <location>
        <begin position="58"/>
        <end position="78"/>
    </location>
</feature>
<feature type="transmembrane region" description="Helical" evidence="1">
    <location>
        <begin position="87"/>
        <end position="107"/>
    </location>
</feature>
<feature type="transmembrane region" description="Helical" evidence="1">
    <location>
        <begin position="109"/>
        <end position="129"/>
    </location>
</feature>
<feature type="transmembrane region" description="Helical" evidence="1">
    <location>
        <begin position="185"/>
        <end position="205"/>
    </location>
</feature>
<feature type="transmembrane region" description="Helical" evidence="1">
    <location>
        <begin position="221"/>
        <end position="241"/>
    </location>
</feature>
<feature type="transmembrane region" description="Helical" evidence="1">
    <location>
        <begin position="271"/>
        <end position="291"/>
    </location>
</feature>
<feature type="transmembrane region" description="Helical" evidence="1">
    <location>
        <begin position="293"/>
        <end position="313"/>
    </location>
</feature>
<feature type="transmembrane region" description="Helical" evidence="1">
    <location>
        <begin position="334"/>
        <end position="354"/>
    </location>
</feature>
<feature type="transmembrane region" description="Helical" evidence="1">
    <location>
        <begin position="363"/>
        <end position="383"/>
    </location>
</feature>
<feature type="domain" description="RCK C-terminal" evidence="1">
    <location>
        <begin position="403"/>
        <end position="485"/>
    </location>
</feature>